<comment type="catalytic activity">
    <reaction evidence="1">
        <text>tRNA(Cys) + L-cysteine + ATP = L-cysteinyl-tRNA(Cys) + AMP + diphosphate</text>
        <dbReference type="Rhea" id="RHEA:17773"/>
        <dbReference type="Rhea" id="RHEA-COMP:9661"/>
        <dbReference type="Rhea" id="RHEA-COMP:9679"/>
        <dbReference type="ChEBI" id="CHEBI:30616"/>
        <dbReference type="ChEBI" id="CHEBI:33019"/>
        <dbReference type="ChEBI" id="CHEBI:35235"/>
        <dbReference type="ChEBI" id="CHEBI:78442"/>
        <dbReference type="ChEBI" id="CHEBI:78517"/>
        <dbReference type="ChEBI" id="CHEBI:456215"/>
        <dbReference type="EC" id="6.1.1.16"/>
    </reaction>
</comment>
<comment type="cofactor">
    <cofactor evidence="1">
        <name>Zn(2+)</name>
        <dbReference type="ChEBI" id="CHEBI:29105"/>
    </cofactor>
    <text evidence="1">Binds 1 zinc ion per subunit.</text>
</comment>
<comment type="subunit">
    <text evidence="1">Monomer.</text>
</comment>
<comment type="subcellular location">
    <subcellularLocation>
        <location evidence="1">Cytoplasm</location>
    </subcellularLocation>
</comment>
<comment type="similarity">
    <text evidence="1">Belongs to the class-I aminoacyl-tRNA synthetase family.</text>
</comment>
<accession>A6TZ06</accession>
<keyword id="KW-0030">Aminoacyl-tRNA synthetase</keyword>
<keyword id="KW-0067">ATP-binding</keyword>
<keyword id="KW-0963">Cytoplasm</keyword>
<keyword id="KW-0436">Ligase</keyword>
<keyword id="KW-0479">Metal-binding</keyword>
<keyword id="KW-0547">Nucleotide-binding</keyword>
<keyword id="KW-0648">Protein biosynthesis</keyword>
<keyword id="KW-0862">Zinc</keyword>
<name>SYC_STAA2</name>
<organism>
    <name type="scientific">Staphylococcus aureus (strain JH1)</name>
    <dbReference type="NCBI Taxonomy" id="359787"/>
    <lineage>
        <taxon>Bacteria</taxon>
        <taxon>Bacillati</taxon>
        <taxon>Bacillota</taxon>
        <taxon>Bacilli</taxon>
        <taxon>Bacillales</taxon>
        <taxon>Staphylococcaceae</taxon>
        <taxon>Staphylococcus</taxon>
    </lineage>
</organism>
<reference key="1">
    <citation type="submission" date="2007-06" db="EMBL/GenBank/DDBJ databases">
        <title>Complete sequence of chromosome of Staphylococcus aureus subsp. aureus JH1.</title>
        <authorList>
            <consortium name="US DOE Joint Genome Institute"/>
            <person name="Copeland A."/>
            <person name="Lucas S."/>
            <person name="Lapidus A."/>
            <person name="Barry K."/>
            <person name="Detter J.C."/>
            <person name="Glavina del Rio T."/>
            <person name="Hammon N."/>
            <person name="Israni S."/>
            <person name="Dalin E."/>
            <person name="Tice H."/>
            <person name="Pitluck S."/>
            <person name="Chain P."/>
            <person name="Malfatti S."/>
            <person name="Shin M."/>
            <person name="Vergez L."/>
            <person name="Schmutz J."/>
            <person name="Larimer F."/>
            <person name="Land M."/>
            <person name="Hauser L."/>
            <person name="Kyrpides N."/>
            <person name="Ivanova N."/>
            <person name="Tomasz A."/>
            <person name="Richardson P."/>
        </authorList>
    </citation>
    <scope>NUCLEOTIDE SEQUENCE [LARGE SCALE GENOMIC DNA]</scope>
    <source>
        <strain>JH1</strain>
    </source>
</reference>
<feature type="chain" id="PRO_1000074628" description="Cysteine--tRNA ligase">
    <location>
        <begin position="1"/>
        <end position="466"/>
    </location>
</feature>
<feature type="short sequence motif" description="'HIGH' region">
    <location>
        <begin position="30"/>
        <end position="40"/>
    </location>
</feature>
<feature type="short sequence motif" description="'KMSKS' region">
    <location>
        <begin position="265"/>
        <end position="269"/>
    </location>
</feature>
<feature type="binding site" evidence="1">
    <location>
        <position position="28"/>
    </location>
    <ligand>
        <name>Zn(2+)</name>
        <dbReference type="ChEBI" id="CHEBI:29105"/>
    </ligand>
</feature>
<feature type="binding site" evidence="1">
    <location>
        <position position="208"/>
    </location>
    <ligand>
        <name>Zn(2+)</name>
        <dbReference type="ChEBI" id="CHEBI:29105"/>
    </ligand>
</feature>
<feature type="binding site" evidence="1">
    <location>
        <position position="233"/>
    </location>
    <ligand>
        <name>Zn(2+)</name>
        <dbReference type="ChEBI" id="CHEBI:29105"/>
    </ligand>
</feature>
<feature type="binding site" evidence="1">
    <location>
        <position position="237"/>
    </location>
    <ligand>
        <name>Zn(2+)</name>
        <dbReference type="ChEBI" id="CHEBI:29105"/>
    </ligand>
</feature>
<feature type="binding site" evidence="1">
    <location>
        <position position="268"/>
    </location>
    <ligand>
        <name>ATP</name>
        <dbReference type="ChEBI" id="CHEBI:30616"/>
    </ligand>
</feature>
<evidence type="ECO:0000255" key="1">
    <source>
        <dbReference type="HAMAP-Rule" id="MF_00041"/>
    </source>
</evidence>
<sequence length="466" mass="53684">MITLYNTLTRQKEVFKPIEPGKVKMYVCGPTVYNYIHIGNARPAINYDVVRRYFEYQGYNVEYVSNFTDVDDKLIKRSQELNQSVPEIAEKYIAAFHEDVGALNVRKATSNPRVMDHMDDIIQFIKDLVDQGYAYESGGDVYFRTRKFEGYGKLSHQSIDDLKVGARIDAGEHKEDALDFTLWKKAKPGEISWNSPFGEGRPGWHIECSVMAFHELGPTIDIHAGGSDLQFPHHENEIAQSEAHNHAPFANYWMHNGFINIDNEKMSKSLGNFILVHDIIKEVDPDVLRFFMISVHYRSPINYNLELVESARSGLERIRNSYQLIEERAQIATNIENQQTYIDQIDAILNRFETVMNDDFNTANAITAWYDLAKLANKYVLENTTSTEVIDKFKAVYQIFSDVLGVPLKSKNADELLDEDVEKLIEERNEARKNKDFARADEIRDMLKSQNIILEDTPQGVRFKRG</sequence>
<proteinExistence type="inferred from homology"/>
<dbReference type="EC" id="6.1.1.16" evidence="1"/>
<dbReference type="EMBL" id="CP000736">
    <property type="protein sequence ID" value="ABR51424.1"/>
    <property type="molecule type" value="Genomic_DNA"/>
</dbReference>
<dbReference type="SMR" id="A6TZ06"/>
<dbReference type="KEGG" id="sah:SaurJH1_0566"/>
<dbReference type="HOGENOM" id="CLU_013528_0_1_9"/>
<dbReference type="GO" id="GO:0005829">
    <property type="term" value="C:cytosol"/>
    <property type="evidence" value="ECO:0007669"/>
    <property type="project" value="TreeGrafter"/>
</dbReference>
<dbReference type="GO" id="GO:0005524">
    <property type="term" value="F:ATP binding"/>
    <property type="evidence" value="ECO:0007669"/>
    <property type="project" value="UniProtKB-UniRule"/>
</dbReference>
<dbReference type="GO" id="GO:0004817">
    <property type="term" value="F:cysteine-tRNA ligase activity"/>
    <property type="evidence" value="ECO:0007669"/>
    <property type="project" value="UniProtKB-UniRule"/>
</dbReference>
<dbReference type="GO" id="GO:0008270">
    <property type="term" value="F:zinc ion binding"/>
    <property type="evidence" value="ECO:0007669"/>
    <property type="project" value="UniProtKB-UniRule"/>
</dbReference>
<dbReference type="GO" id="GO:0006423">
    <property type="term" value="P:cysteinyl-tRNA aminoacylation"/>
    <property type="evidence" value="ECO:0007669"/>
    <property type="project" value="UniProtKB-UniRule"/>
</dbReference>
<dbReference type="CDD" id="cd00672">
    <property type="entry name" value="CysRS_core"/>
    <property type="match status" value="1"/>
</dbReference>
<dbReference type="FunFam" id="1.20.120.1910:FF:000002">
    <property type="entry name" value="Cysteine--tRNA ligase"/>
    <property type="match status" value="1"/>
</dbReference>
<dbReference type="FunFam" id="3.40.50.620:FF:000009">
    <property type="entry name" value="Cysteine--tRNA ligase"/>
    <property type="match status" value="1"/>
</dbReference>
<dbReference type="Gene3D" id="1.20.120.1910">
    <property type="entry name" value="Cysteine-tRNA ligase, C-terminal anti-codon recognition domain"/>
    <property type="match status" value="1"/>
</dbReference>
<dbReference type="Gene3D" id="3.40.50.620">
    <property type="entry name" value="HUPs"/>
    <property type="match status" value="1"/>
</dbReference>
<dbReference type="HAMAP" id="MF_00041">
    <property type="entry name" value="Cys_tRNA_synth"/>
    <property type="match status" value="1"/>
</dbReference>
<dbReference type="InterPro" id="IPR015803">
    <property type="entry name" value="Cys-tRNA-ligase"/>
</dbReference>
<dbReference type="InterPro" id="IPR015273">
    <property type="entry name" value="Cys-tRNA-synt_Ia_DALR"/>
</dbReference>
<dbReference type="InterPro" id="IPR024909">
    <property type="entry name" value="Cys-tRNA/MSH_ligase"/>
</dbReference>
<dbReference type="InterPro" id="IPR056411">
    <property type="entry name" value="CysS_C"/>
</dbReference>
<dbReference type="InterPro" id="IPR014729">
    <property type="entry name" value="Rossmann-like_a/b/a_fold"/>
</dbReference>
<dbReference type="InterPro" id="IPR032678">
    <property type="entry name" value="tRNA-synt_1_cat_dom"/>
</dbReference>
<dbReference type="InterPro" id="IPR009080">
    <property type="entry name" value="tRNAsynth_Ia_anticodon-bd"/>
</dbReference>
<dbReference type="NCBIfam" id="TIGR00435">
    <property type="entry name" value="cysS"/>
    <property type="match status" value="1"/>
</dbReference>
<dbReference type="PANTHER" id="PTHR10890:SF3">
    <property type="entry name" value="CYSTEINE--TRNA LIGASE, CYTOPLASMIC"/>
    <property type="match status" value="1"/>
</dbReference>
<dbReference type="PANTHER" id="PTHR10890">
    <property type="entry name" value="CYSTEINYL-TRNA SYNTHETASE"/>
    <property type="match status" value="1"/>
</dbReference>
<dbReference type="Pfam" id="PF23493">
    <property type="entry name" value="CysS_C"/>
    <property type="match status" value="1"/>
</dbReference>
<dbReference type="Pfam" id="PF09190">
    <property type="entry name" value="DALR_2"/>
    <property type="match status" value="1"/>
</dbReference>
<dbReference type="Pfam" id="PF01406">
    <property type="entry name" value="tRNA-synt_1e"/>
    <property type="match status" value="1"/>
</dbReference>
<dbReference type="PRINTS" id="PR00983">
    <property type="entry name" value="TRNASYNTHCYS"/>
</dbReference>
<dbReference type="SMART" id="SM00840">
    <property type="entry name" value="DALR_2"/>
    <property type="match status" value="1"/>
</dbReference>
<dbReference type="SUPFAM" id="SSF47323">
    <property type="entry name" value="Anticodon-binding domain of a subclass of class I aminoacyl-tRNA synthetases"/>
    <property type="match status" value="1"/>
</dbReference>
<dbReference type="SUPFAM" id="SSF52374">
    <property type="entry name" value="Nucleotidylyl transferase"/>
    <property type="match status" value="1"/>
</dbReference>
<gene>
    <name evidence="1" type="primary">cysS</name>
    <name type="ordered locus">SaurJH1_0566</name>
</gene>
<protein>
    <recommendedName>
        <fullName evidence="1">Cysteine--tRNA ligase</fullName>
        <ecNumber evidence="1">6.1.1.16</ecNumber>
    </recommendedName>
    <alternativeName>
        <fullName evidence="1">Cysteinyl-tRNA synthetase</fullName>
        <shortName evidence="1">CysRS</shortName>
    </alternativeName>
</protein>